<comment type="function">
    <text evidence="1">Encapsidates the genome, protecting it from nucleases. The encapsidated genomic RNA is termed the nucleocapsid (NC). Serves as template for viral transcription and replication. The increased presence of protein N in host cell does not seem to trigger the switch from transcription to replication as observed in other negative strain RNA viruses. Through the interaction with host IKBKE, strongly inhibits the phosphorylation and nuclear translocation of host IRF3, a protein involved in interferon activation pathway, leading to the inhibition of interferon-beta and IRF3-dependent promoters activation. Also encodes a functional 3'-5' exoribonuclease that degrades preferentially dsRNA substrates and thereby participates in the suppression of interferon induction.</text>
</comment>
<comment type="subunit">
    <text evidence="1">Homomultimerizes to form the nucleocapsid. Binds to viral genomic RNA. Interacts with glycoprotein G2. Interacts with protein Z; this interaction probably directs the encapsidated genome to budding sites. Interacts with protein L; this interaction does not interfere with Z-L interaction. Interacts with host IKBKE (via Protein kinase domain); the interaction inhibits IKBKE kinase activity.</text>
</comment>
<comment type="subcellular location">
    <subcellularLocation>
        <location evidence="1">Virion</location>
    </subcellularLocation>
    <subcellularLocation>
        <location evidence="1">Host cytoplasm</location>
    </subcellularLocation>
</comment>
<comment type="domain">
    <text evidence="1">The N-terminal region is important for the cap-binding activity while the C-terminal region contains the 3'-5' exoribonuclease activity. A CCHE zinc binding site is present in the C-terminal region and may thus contribute to the substrate binding and/or the specificity of the exonuclease activity.</text>
</comment>
<comment type="similarity">
    <text evidence="1">Belongs to the arenaviridae nucleocapsid protein family.</text>
</comment>
<accession>A0PJ26</accession>
<organism>
    <name type="scientific">Bear Canyon mammarenavirus (isolate Mouse/United States/AV A0070039/2000)</name>
    <name type="common">BCNV</name>
    <dbReference type="NCBI Taxonomy" id="3052298"/>
    <lineage>
        <taxon>Viruses</taxon>
        <taxon>Riboviria</taxon>
        <taxon>Orthornavirae</taxon>
        <taxon>Negarnaviricota</taxon>
        <taxon>Polyploviricotina</taxon>
        <taxon>Ellioviricetes</taxon>
        <taxon>Bunyavirales</taxon>
        <taxon>Arenaviridae</taxon>
        <taxon>Mammarenavirus</taxon>
    </lineage>
</organism>
<gene>
    <name evidence="1" type="primary">N</name>
</gene>
<feature type="chain" id="PRO_0000361004" description="Nucleoprotein">
    <location>
        <begin position="1"/>
        <end position="562"/>
    </location>
</feature>
<feature type="region of interest" description="Binding site for the cap structure m7GTP" evidence="1">
    <location>
        <begin position="53"/>
        <end position="238"/>
    </location>
</feature>
<feature type="binding site" evidence="1">
    <location>
        <position position="381"/>
    </location>
    <ligand>
        <name>Mn(2+)</name>
        <dbReference type="ChEBI" id="CHEBI:29035"/>
    </ligand>
</feature>
<feature type="binding site" evidence="1">
    <location>
        <position position="383"/>
    </location>
    <ligand>
        <name>Mn(2+)</name>
        <dbReference type="ChEBI" id="CHEBI:29035"/>
    </ligand>
</feature>
<feature type="binding site" evidence="1">
    <location>
        <position position="391"/>
    </location>
    <ligand>
        <name>Zn(2+)</name>
        <dbReference type="ChEBI" id="CHEBI:29105"/>
    </ligand>
</feature>
<feature type="binding site" evidence="1">
    <location>
        <position position="498"/>
    </location>
    <ligand>
        <name>Zn(2+)</name>
        <dbReference type="ChEBI" id="CHEBI:29105"/>
    </ligand>
</feature>
<feature type="binding site" evidence="1">
    <location>
        <position position="501"/>
    </location>
    <ligand>
        <name>Zn(2+)</name>
        <dbReference type="ChEBI" id="CHEBI:29105"/>
    </ligand>
</feature>
<feature type="binding site" evidence="1">
    <location>
        <position position="522"/>
    </location>
    <ligand>
        <name>Zn(2+)</name>
        <dbReference type="ChEBI" id="CHEBI:29105"/>
    </ligand>
</feature>
<feature type="binding site" evidence="1">
    <location>
        <position position="526"/>
    </location>
    <ligand>
        <name>Mn(2+)</name>
        <dbReference type="ChEBI" id="CHEBI:29035"/>
    </ligand>
</feature>
<feature type="site" description="Important for exonuclease activity" evidence="1">
    <location>
        <position position="458"/>
    </location>
</feature>
<evidence type="ECO:0000255" key="1">
    <source>
        <dbReference type="HAMAP-Rule" id="MF_04085"/>
    </source>
</evidence>
<keyword id="KW-0167">Capsid protein</keyword>
<keyword id="KW-1139">Helical capsid protein</keyword>
<keyword id="KW-1035">Host cytoplasm</keyword>
<keyword id="KW-0945">Host-virus interaction</keyword>
<keyword id="KW-0378">Hydrolase</keyword>
<keyword id="KW-1224">Inhibition of host IKBKE by virus</keyword>
<keyword id="KW-1090">Inhibition of host innate immune response by virus</keyword>
<keyword id="KW-1113">Inhibition of host RLR pathway by virus</keyword>
<keyword id="KW-0922">Interferon antiviral system evasion</keyword>
<keyword id="KW-0464">Manganese</keyword>
<keyword id="KW-0479">Metal-binding</keyword>
<keyword id="KW-0687">Ribonucleoprotein</keyword>
<keyword id="KW-0694">RNA-binding</keyword>
<keyword id="KW-0899">Viral immunoevasion</keyword>
<keyword id="KW-0543">Viral nucleoprotein</keyword>
<keyword id="KW-0946">Virion</keyword>
<keyword id="KW-0862">Zinc</keyword>
<organismHost>
    <name type="scientific">Peromyscus californicus</name>
    <name type="common">California mouse</name>
    <dbReference type="NCBI Taxonomy" id="42520"/>
</organismHost>
<sequence>MSDQVVHSFRWTQSLRRGLSNWTCPVKADVLNDTRALLSGLDFAKVASVQRMMRRDKRDESDLTSLRDLNKEVDSLMTMKSTQKNMFLKVGSLSKGELMELSGDLNKLKDKVQRTERPPGSGGQYQGNLTTTQLTRRGELLQFIGIQKAGRVGMNGVVKVWDVKDSSLMINQFGSMPALTISCMAEQGGETLNDVVQGLTDLGLLYTAKYPNLNDLEALSEKHPCLKVITQEESQINISGYNLSLSAAVKAGACLIDGGNMLETIKIDTSTFTTVIKTLLEVKARERMFVSSVPGQRNPYENILYKLCLSGEGWPYIASRSQIKGRAWDNTVVEFDSAPPRAPVPVRNGGAPLLGPLRPELEDQVRKGVEGLSPNLTTWIDIEGPPNDPVELAIYQPETQKYLHCYRRPNDIKSFKDQSKYCHGILLKDVENARPGLISTIIRYLPKSMVFTAQGEDDIKRLFDMHGRQDLKIVDVKLSAEQSRVFEELVWKKFEHLCDRHKGIVIKSKKKGSKPASTNAHCALMDCIMFNAVLVGFVADEKPKRLLPIDILFREPDTTVVL</sequence>
<dbReference type="EC" id="3.1.13.-" evidence="1"/>
<dbReference type="EMBL" id="AY924391">
    <property type="protein sequence ID" value="AAX99346.1"/>
    <property type="molecule type" value="Genomic_RNA"/>
</dbReference>
<dbReference type="RefSeq" id="YP_001649227.1">
    <property type="nucleotide sequence ID" value="NC_010256.1"/>
</dbReference>
<dbReference type="SMR" id="A0PJ26"/>
<dbReference type="KEGG" id="vg:5848383"/>
<dbReference type="OrthoDB" id="3135at10239"/>
<dbReference type="Proteomes" id="UP000172257">
    <property type="component" value="Genome"/>
</dbReference>
<dbReference type="GO" id="GO:0019029">
    <property type="term" value="C:helical viral capsid"/>
    <property type="evidence" value="ECO:0007669"/>
    <property type="project" value="UniProtKB-UniRule"/>
</dbReference>
<dbReference type="GO" id="GO:0030430">
    <property type="term" value="C:host cell cytoplasm"/>
    <property type="evidence" value="ECO:0007669"/>
    <property type="project" value="UniProtKB-SubCell"/>
</dbReference>
<dbReference type="GO" id="GO:1990904">
    <property type="term" value="C:ribonucleoprotein complex"/>
    <property type="evidence" value="ECO:0007669"/>
    <property type="project" value="UniProtKB-KW"/>
</dbReference>
<dbReference type="GO" id="GO:0019013">
    <property type="term" value="C:viral nucleocapsid"/>
    <property type="evidence" value="ECO:0007669"/>
    <property type="project" value="UniProtKB-UniRule"/>
</dbReference>
<dbReference type="GO" id="GO:0016787">
    <property type="term" value="F:hydrolase activity"/>
    <property type="evidence" value="ECO:0007669"/>
    <property type="project" value="UniProtKB-KW"/>
</dbReference>
<dbReference type="GO" id="GO:0046872">
    <property type="term" value="F:metal ion binding"/>
    <property type="evidence" value="ECO:0007669"/>
    <property type="project" value="UniProtKB-UniRule"/>
</dbReference>
<dbReference type="GO" id="GO:0003723">
    <property type="term" value="F:RNA binding"/>
    <property type="evidence" value="ECO:0007669"/>
    <property type="project" value="UniProtKB-UniRule"/>
</dbReference>
<dbReference type="GO" id="GO:0039689">
    <property type="term" value="P:negative stranded viral RNA replication"/>
    <property type="evidence" value="ECO:0000250"/>
    <property type="project" value="UniProtKB"/>
</dbReference>
<dbReference type="GO" id="GO:0039696">
    <property type="term" value="P:RNA-templated viral transcription"/>
    <property type="evidence" value="ECO:0000250"/>
    <property type="project" value="UniProtKB"/>
</dbReference>
<dbReference type="GO" id="GO:0039724">
    <property type="term" value="P:symbiont-mediated suppression of host cytoplasmic pattern recognition receptor signaling pathway via inhibition of IKBKE activity"/>
    <property type="evidence" value="ECO:0007669"/>
    <property type="project" value="UniProtKB-UniRule"/>
</dbReference>
<dbReference type="FunFam" id="1.10.150.550:FF:000001">
    <property type="entry name" value="Nucleoprotein"/>
    <property type="match status" value="1"/>
</dbReference>
<dbReference type="FunFam" id="1.10.150.550:FF:000002">
    <property type="entry name" value="Nucleoprotein"/>
    <property type="match status" value="1"/>
</dbReference>
<dbReference type="FunFam" id="3.30.420.410:FF:000001">
    <property type="entry name" value="Nucleoprotein"/>
    <property type="match status" value="1"/>
</dbReference>
<dbReference type="Gene3D" id="3.30.420.410">
    <property type="entry name" value="Arenaviral nucleoprotein, C-terminal domain"/>
    <property type="match status" value="1"/>
</dbReference>
<dbReference type="Gene3D" id="1.10.150.550">
    <property type="entry name" value="Arenavirus nucleocapsid protein, head domain"/>
    <property type="match status" value="2"/>
</dbReference>
<dbReference type="HAMAP" id="MF_04085">
    <property type="entry name" value="ARENA_NCAP"/>
    <property type="match status" value="1"/>
</dbReference>
<dbReference type="InterPro" id="IPR000229">
    <property type="entry name" value="Nucleocapsid_arenaviridae"/>
</dbReference>
<dbReference type="InterPro" id="IPR035084">
    <property type="entry name" value="Nucleocapsid_C_arenaviridae"/>
</dbReference>
<dbReference type="InterPro" id="IPR038115">
    <property type="entry name" value="Nucleocapsid_C_sf"/>
</dbReference>
<dbReference type="InterPro" id="IPR035083">
    <property type="entry name" value="Nucleocapsid_N_arenaviridae"/>
</dbReference>
<dbReference type="InterPro" id="IPR012337">
    <property type="entry name" value="RNaseH-like_sf"/>
</dbReference>
<dbReference type="Pfam" id="PF17290">
    <property type="entry name" value="Arena_ncap_C"/>
    <property type="match status" value="1"/>
</dbReference>
<dbReference type="Pfam" id="PF00843">
    <property type="entry name" value="Arena_nucleocap"/>
    <property type="match status" value="1"/>
</dbReference>
<dbReference type="PIRSF" id="PIRSF004029">
    <property type="entry name" value="N_ArenaV"/>
    <property type="match status" value="1"/>
</dbReference>
<dbReference type="SUPFAM" id="SSF53098">
    <property type="entry name" value="Ribonuclease H-like"/>
    <property type="match status" value="1"/>
</dbReference>
<protein>
    <recommendedName>
        <fullName evidence="1">Nucleoprotein</fullName>
        <ecNumber evidence="1">3.1.13.-</ecNumber>
    </recommendedName>
    <alternativeName>
        <fullName evidence="1">Nucleocapsid protein</fullName>
    </alternativeName>
    <alternativeName>
        <fullName evidence="1">Protein N</fullName>
    </alternativeName>
</protein>
<reference key="1">
    <citation type="journal article" date="2007" name="Virology">
        <title>Principal host relationships and evolutionary history of the North American arenaviruses.</title>
        <authorList>
            <person name="Cajimat M.N."/>
            <person name="Milazzo M.L."/>
            <person name="Hess B.D."/>
            <person name="Rood M.P."/>
            <person name="Fulhorst C.F."/>
        </authorList>
    </citation>
    <scope>NUCLEOTIDE SEQUENCE [GENOMIC RNA]</scope>
</reference>
<proteinExistence type="inferred from homology"/>
<name>NCAP_BCNVU</name>